<feature type="peptide" id="PRO_0000392446" description="Neuropeptide F" evidence="2 3">
    <location>
        <begin position="1"/>
        <end position="9"/>
    </location>
</feature>
<feature type="modified residue" description="Phenylalanine amide" evidence="3">
    <location>
        <position position="9"/>
    </location>
</feature>
<name>NPF_SCHGR</name>
<evidence type="ECO:0000255" key="1"/>
<evidence type="ECO:0000269" key="2">
    <source>
    </source>
</evidence>
<evidence type="ECO:0000269" key="3">
    <source>
    </source>
</evidence>
<evidence type="ECO:0000269" key="4">
    <source>
    </source>
</evidence>
<evidence type="ECO:0000303" key="5">
    <source>
    </source>
</evidence>
<evidence type="ECO:0000303" key="6">
    <source>
    </source>
</evidence>
<evidence type="ECO:0000303" key="7">
    <source>
    </source>
</evidence>
<evidence type="ECO:0000305" key="8"/>
<sequence length="9" mass="1123">YSQVARPRF</sequence>
<proteinExistence type="evidence at protein level"/>
<keyword id="KW-0027">Amidation</keyword>
<keyword id="KW-0903">Direct protein sequencing</keyword>
<keyword id="KW-0527">Neuropeptide</keyword>
<keyword id="KW-0964">Secreted</keyword>
<accession>P86443</accession>
<organism>
    <name type="scientific">Schistocerca gregaria</name>
    <name type="common">Desert locust</name>
    <name type="synonym">Gryllus gregarius</name>
    <dbReference type="NCBI Taxonomy" id="7010"/>
    <lineage>
        <taxon>Eukaryota</taxon>
        <taxon>Metazoa</taxon>
        <taxon>Ecdysozoa</taxon>
        <taxon>Arthropoda</taxon>
        <taxon>Hexapoda</taxon>
        <taxon>Insecta</taxon>
        <taxon>Pterygota</taxon>
        <taxon>Neoptera</taxon>
        <taxon>Polyneoptera</taxon>
        <taxon>Orthoptera</taxon>
        <taxon>Caelifera</taxon>
        <taxon>Acrididea</taxon>
        <taxon>Acridomorpha</taxon>
        <taxon>Acridoidea</taxon>
        <taxon>Acrididae</taxon>
        <taxon>Cyrtacanthacridinae</taxon>
        <taxon>Schistocerca</taxon>
    </lineage>
</organism>
<protein>
    <recommendedName>
        <fullName evidence="5 6 7">Neuropeptide F</fullName>
        <shortName evidence="5">NPF</shortName>
        <shortName evidence="7">Scg-NPF</shortName>
    </recommendedName>
</protein>
<reference evidence="8" key="1">
    <citation type="journal article" date="2001" name="Peptides">
        <title>Newly discovered functions for some myotropic neuropeptides in locusts.</title>
        <authorList>
            <person name="Schoofs L."/>
            <person name="Clynen E."/>
            <person name="Cerstiaens A."/>
            <person name="Baggerman G."/>
            <person name="Wei Z."/>
            <person name="Vercammen T."/>
            <person name="Nachman R."/>
            <person name="De Loof A."/>
            <person name="Tanaka S."/>
        </authorList>
    </citation>
    <scope>PROTEIN SEQUENCE</scope>
    <scope>FUNCTION</scope>
</reference>
<reference evidence="8" key="2">
    <citation type="journal article" date="2009" name="Ann. N. Y. Acad. Sci.">
        <title>Identification of new members of the (short) neuropeptide F family in locusts and Caenorhabditis elegans.</title>
        <authorList>
            <person name="Clynen E."/>
            <person name="Husson S.J."/>
            <person name="Schoofs L."/>
        </authorList>
    </citation>
    <scope>PROTEIN SEQUENCE</scope>
    <scope>TISSUE SPECIFICITY</scope>
    <scope>MASS SPECTROMETRY</scope>
    <scope>AMIDATION AT PHE-9</scope>
</reference>
<reference evidence="8" key="3">
    <citation type="journal article" date="2009" name="Insect Biochem. Mol. Biol.">
        <title>Peptidomic survey of the locust neuroendocrine system.</title>
        <authorList>
            <person name="Clynen E."/>
            <person name="Schoofs L."/>
        </authorList>
    </citation>
    <scope>IDENTIFICATION BY MASS SPECTROMETRY</scope>
    <scope>TISSUE SPECIFICITY</scope>
</reference>
<comment type="function">
    <text evidence="2">Accelerates ovarian maturation in females.</text>
</comment>
<comment type="subcellular location">
    <subcellularLocation>
        <location evidence="8">Secreted</location>
    </subcellularLocation>
</comment>
<comment type="tissue specificity">
    <text evidence="3 4">Widely expressed in the nervous system. Expressed in corpora cardiaca, hypocerebral ganglion, frontal ganglion, protocerebrum, antennal lobe, tritocerebrum, thoracic ganglia, esophageal nerves, recurrent nerve and frontal connectives. Not detected in corpora allata, circumesophageal connectives, subesophageal ganglion, abdominal ganglion and abdominal perisympathetic organs.</text>
</comment>
<comment type="mass spectrometry" mass="1121.6" method="MALDI" evidence="3"/>
<comment type="similarity">
    <text evidence="1">Belongs to the NPY family.</text>
</comment>
<dbReference type="GO" id="GO:0005576">
    <property type="term" value="C:extracellular region"/>
    <property type="evidence" value="ECO:0007669"/>
    <property type="project" value="UniProtKB-SubCell"/>
</dbReference>
<dbReference type="GO" id="GO:0007218">
    <property type="term" value="P:neuropeptide signaling pathway"/>
    <property type="evidence" value="ECO:0007669"/>
    <property type="project" value="UniProtKB-KW"/>
</dbReference>